<name>NUON2_AQUAE</name>
<organism>
    <name type="scientific">Aquifex aeolicus (strain VF5)</name>
    <dbReference type="NCBI Taxonomy" id="224324"/>
    <lineage>
        <taxon>Bacteria</taxon>
        <taxon>Pseudomonadati</taxon>
        <taxon>Aquificota</taxon>
        <taxon>Aquificia</taxon>
        <taxon>Aquificales</taxon>
        <taxon>Aquificaceae</taxon>
        <taxon>Aquifex</taxon>
    </lineage>
</organism>
<reference key="1">
    <citation type="journal article" date="1998" name="Nature">
        <title>The complete genome of the hyperthermophilic bacterium Aquifex aeolicus.</title>
        <authorList>
            <person name="Deckert G."/>
            <person name="Warren P.V."/>
            <person name="Gaasterland T."/>
            <person name="Young W.G."/>
            <person name="Lenox A.L."/>
            <person name="Graham D.E."/>
            <person name="Overbeek R."/>
            <person name="Snead M.A."/>
            <person name="Keller M."/>
            <person name="Aujay M."/>
            <person name="Huber R."/>
            <person name="Feldman R.A."/>
            <person name="Short J.M."/>
            <person name="Olsen G.J."/>
            <person name="Swanson R.V."/>
        </authorList>
    </citation>
    <scope>NUCLEOTIDE SEQUENCE [LARGE SCALE GENOMIC DNA]</scope>
    <source>
        <strain>VF5</strain>
    </source>
</reference>
<dbReference type="EC" id="7.1.1.-" evidence="1"/>
<dbReference type="EMBL" id="AE000657">
    <property type="protein sequence ID" value="AAC07354.1"/>
    <property type="molecule type" value="Genomic_DNA"/>
</dbReference>
<dbReference type="PIR" id="D70420">
    <property type="entry name" value="D70420"/>
</dbReference>
<dbReference type="RefSeq" id="NP_213955.1">
    <property type="nucleotide sequence ID" value="NC_000918.1"/>
</dbReference>
<dbReference type="RefSeq" id="WP_010880893.1">
    <property type="nucleotide sequence ID" value="NC_000918.1"/>
</dbReference>
<dbReference type="SMR" id="O67391"/>
<dbReference type="FunCoup" id="O67391">
    <property type="interactions" value="132"/>
</dbReference>
<dbReference type="STRING" id="224324.aq_1383"/>
<dbReference type="EnsemblBacteria" id="AAC07354">
    <property type="protein sequence ID" value="AAC07354"/>
    <property type="gene ID" value="aq_1383"/>
</dbReference>
<dbReference type="KEGG" id="aae:aq_1383"/>
<dbReference type="PATRIC" id="fig|224324.8.peg.1082"/>
<dbReference type="eggNOG" id="COG1007">
    <property type="taxonomic scope" value="Bacteria"/>
</dbReference>
<dbReference type="HOGENOM" id="CLU_007100_1_4_0"/>
<dbReference type="InParanoid" id="O67391"/>
<dbReference type="OrthoDB" id="9807568at2"/>
<dbReference type="Proteomes" id="UP000000798">
    <property type="component" value="Chromosome"/>
</dbReference>
<dbReference type="GO" id="GO:0005886">
    <property type="term" value="C:plasma membrane"/>
    <property type="evidence" value="ECO:0007669"/>
    <property type="project" value="UniProtKB-SubCell"/>
</dbReference>
<dbReference type="GO" id="GO:0008137">
    <property type="term" value="F:NADH dehydrogenase (ubiquinone) activity"/>
    <property type="evidence" value="ECO:0007669"/>
    <property type="project" value="InterPro"/>
</dbReference>
<dbReference type="GO" id="GO:0050136">
    <property type="term" value="F:NADH:ubiquinone reductase (non-electrogenic) activity"/>
    <property type="evidence" value="ECO:0007669"/>
    <property type="project" value="UniProtKB-UniRule"/>
</dbReference>
<dbReference type="GO" id="GO:0048038">
    <property type="term" value="F:quinone binding"/>
    <property type="evidence" value="ECO:0007669"/>
    <property type="project" value="UniProtKB-KW"/>
</dbReference>
<dbReference type="GO" id="GO:0042773">
    <property type="term" value="P:ATP synthesis coupled electron transport"/>
    <property type="evidence" value="ECO:0007669"/>
    <property type="project" value="InterPro"/>
</dbReference>
<dbReference type="HAMAP" id="MF_00445">
    <property type="entry name" value="NDH1_NuoN_1"/>
    <property type="match status" value="1"/>
</dbReference>
<dbReference type="InterPro" id="IPR010096">
    <property type="entry name" value="NADH-Q_OxRdtase_suN/2"/>
</dbReference>
<dbReference type="InterPro" id="IPR001750">
    <property type="entry name" value="ND/Mrp_TM"/>
</dbReference>
<dbReference type="NCBIfam" id="TIGR01770">
    <property type="entry name" value="NDH_I_N"/>
    <property type="match status" value="1"/>
</dbReference>
<dbReference type="PANTHER" id="PTHR22773">
    <property type="entry name" value="NADH DEHYDROGENASE"/>
    <property type="match status" value="1"/>
</dbReference>
<dbReference type="Pfam" id="PF00361">
    <property type="entry name" value="Proton_antipo_M"/>
    <property type="match status" value="1"/>
</dbReference>
<dbReference type="PRINTS" id="PR01434">
    <property type="entry name" value="NADHDHGNASE5"/>
</dbReference>
<comment type="function">
    <text evidence="1">NDH-1 shuttles electrons from NADH, via FMN and iron-sulfur (Fe-S) centers, to quinones in the respiratory chain. The immediate electron acceptor for the enzyme in this species is believed to be ubiquinone. Couples the redox reaction to proton translocation (for every two electrons transferred, four hydrogen ions are translocated across the cytoplasmic membrane), and thus conserves the redox energy in a proton gradient.</text>
</comment>
<comment type="catalytic activity">
    <reaction evidence="1">
        <text>a quinone + NADH + 5 H(+)(in) = a quinol + NAD(+) + 4 H(+)(out)</text>
        <dbReference type="Rhea" id="RHEA:57888"/>
        <dbReference type="ChEBI" id="CHEBI:15378"/>
        <dbReference type="ChEBI" id="CHEBI:24646"/>
        <dbReference type="ChEBI" id="CHEBI:57540"/>
        <dbReference type="ChEBI" id="CHEBI:57945"/>
        <dbReference type="ChEBI" id="CHEBI:132124"/>
    </reaction>
</comment>
<comment type="subunit">
    <text evidence="1">NDH-1 is composed of 14 different subunits. Subunits NuoA, H, J, K, L, M, N constitute the membrane sector of the complex.</text>
</comment>
<comment type="subcellular location">
    <subcellularLocation>
        <location evidence="1">Cell inner membrane</location>
        <topology evidence="1">Multi-pass membrane protein</topology>
    </subcellularLocation>
</comment>
<comment type="similarity">
    <text evidence="1">Belongs to the complex I subunit 2 family.</text>
</comment>
<gene>
    <name evidence="1" type="primary">nuoN2</name>
    <name type="ordered locus">aq_1383</name>
</gene>
<keyword id="KW-0997">Cell inner membrane</keyword>
<keyword id="KW-1003">Cell membrane</keyword>
<keyword id="KW-0472">Membrane</keyword>
<keyword id="KW-0520">NAD</keyword>
<keyword id="KW-0874">Quinone</keyword>
<keyword id="KW-1185">Reference proteome</keyword>
<keyword id="KW-1278">Translocase</keyword>
<keyword id="KW-0812">Transmembrane</keyword>
<keyword id="KW-1133">Transmembrane helix</keyword>
<keyword id="KW-0813">Transport</keyword>
<keyword id="KW-0830">Ubiquinone</keyword>
<accession>O67391</accession>
<evidence type="ECO:0000255" key="1">
    <source>
        <dbReference type="HAMAP-Rule" id="MF_00445"/>
    </source>
</evidence>
<feature type="chain" id="PRO_0000391099" description="NADH-quinone oxidoreductase subunit N 2">
    <location>
        <begin position="1"/>
        <end position="488"/>
    </location>
</feature>
<feature type="transmembrane region" description="Helical" evidence="1">
    <location>
        <begin position="18"/>
        <end position="38"/>
    </location>
</feature>
<feature type="transmembrane region" description="Helical" evidence="1">
    <location>
        <begin position="45"/>
        <end position="65"/>
    </location>
</feature>
<feature type="transmembrane region" description="Helical" evidence="1">
    <location>
        <begin position="81"/>
        <end position="101"/>
    </location>
</feature>
<feature type="transmembrane region" description="Helical" evidence="1">
    <location>
        <begin position="110"/>
        <end position="130"/>
    </location>
</feature>
<feature type="transmembrane region" description="Helical" evidence="1">
    <location>
        <begin position="135"/>
        <end position="155"/>
    </location>
</feature>
<feature type="transmembrane region" description="Helical" evidence="1">
    <location>
        <begin position="169"/>
        <end position="189"/>
    </location>
</feature>
<feature type="transmembrane region" description="Helical" evidence="1">
    <location>
        <begin position="210"/>
        <end position="230"/>
    </location>
</feature>
<feature type="transmembrane region" description="Helical" evidence="1">
    <location>
        <begin position="242"/>
        <end position="262"/>
    </location>
</feature>
<feature type="transmembrane region" description="Helical" evidence="1">
    <location>
        <begin position="274"/>
        <end position="294"/>
    </location>
</feature>
<feature type="transmembrane region" description="Helical" evidence="1">
    <location>
        <begin position="308"/>
        <end position="328"/>
    </location>
</feature>
<feature type="transmembrane region" description="Helical" evidence="1">
    <location>
        <begin position="331"/>
        <end position="351"/>
    </location>
</feature>
<feature type="transmembrane region" description="Helical" evidence="1">
    <location>
        <begin position="375"/>
        <end position="395"/>
    </location>
</feature>
<feature type="transmembrane region" description="Helical" evidence="1">
    <location>
        <begin position="412"/>
        <end position="434"/>
    </location>
</feature>
<feature type="transmembrane region" description="Helical" evidence="1">
    <location>
        <begin position="458"/>
        <end position="478"/>
    </location>
</feature>
<protein>
    <recommendedName>
        <fullName evidence="1">NADH-quinone oxidoreductase subunit N 2</fullName>
        <ecNumber evidence="1">7.1.1.-</ecNumber>
    </recommendedName>
    <alternativeName>
        <fullName evidence="1">NADH dehydrogenase I subunit N 2</fullName>
    </alternativeName>
    <alternativeName>
        <fullName evidence="1">NDH-1 subunit N 2</fullName>
    </alternativeName>
</protein>
<sequence length="488" mass="54265">MDLRALIGVIEIPDLKKFLPEFILLLLAFILFTLELFIKGKERRLVLNVVSYVGYFSVLMSLLIPWMYKGDTFYGNFTNDPLAVTVKIFAVLITLAILPFASSYFSAKKSFYGEFYYILAFTLLGVFVLASTYNLIILYVALELVSVGFYILTALLRGSTEAKEGAFKYLILGGLSIALASYGAAFMYIYSGSLDLREILTYQGKDIHYLVLGLVFFLIGLAVKIGAVPFHYWVPDAYQGAPTPVTALMASVGKLAFFIPLVRVMPLVQEKFSLVWTITVGVIAALTMLYGNLVALVQKDVKRLLAYSSIAHSGYIMAGAAVAKVIGMKAVIYFLVAYAVMSAGAFLVLALMEKNPEWQNYMENFYGLRFNAPYIAFAFFVYMVALLGVPPTVGFVGKALVFMALSFDKLWWLAFIMILSAAISTGYYIRLVVVMYMHEREKEIRSAPSHLGEKFSLFALTLASVLLGVLPSLVWFLIKQSAENLFTG</sequence>
<proteinExistence type="inferred from homology"/>